<gene>
    <name evidence="1" type="primary">murB</name>
    <name type="ordered locus">RBAM_015090</name>
</gene>
<dbReference type="EC" id="1.3.1.98" evidence="1"/>
<dbReference type="EMBL" id="CP000560">
    <property type="protein sequence ID" value="ABS73872.1"/>
    <property type="molecule type" value="Genomic_DNA"/>
</dbReference>
<dbReference type="RefSeq" id="WP_007409709.1">
    <property type="nucleotide sequence ID" value="NC_009725.2"/>
</dbReference>
<dbReference type="SMR" id="A7Z4E6"/>
<dbReference type="GeneID" id="93080642"/>
<dbReference type="KEGG" id="bay:RBAM_015090"/>
<dbReference type="HOGENOM" id="CLU_035304_1_1_9"/>
<dbReference type="UniPathway" id="UPA00219"/>
<dbReference type="Proteomes" id="UP000001120">
    <property type="component" value="Chromosome"/>
</dbReference>
<dbReference type="GO" id="GO:0005829">
    <property type="term" value="C:cytosol"/>
    <property type="evidence" value="ECO:0007669"/>
    <property type="project" value="TreeGrafter"/>
</dbReference>
<dbReference type="GO" id="GO:0071949">
    <property type="term" value="F:FAD binding"/>
    <property type="evidence" value="ECO:0007669"/>
    <property type="project" value="InterPro"/>
</dbReference>
<dbReference type="GO" id="GO:0008762">
    <property type="term" value="F:UDP-N-acetylmuramate dehydrogenase activity"/>
    <property type="evidence" value="ECO:0007669"/>
    <property type="project" value="UniProtKB-UniRule"/>
</dbReference>
<dbReference type="GO" id="GO:0051301">
    <property type="term" value="P:cell division"/>
    <property type="evidence" value="ECO:0007669"/>
    <property type="project" value="UniProtKB-KW"/>
</dbReference>
<dbReference type="GO" id="GO:0071555">
    <property type="term" value="P:cell wall organization"/>
    <property type="evidence" value="ECO:0007669"/>
    <property type="project" value="UniProtKB-KW"/>
</dbReference>
<dbReference type="GO" id="GO:0009252">
    <property type="term" value="P:peptidoglycan biosynthetic process"/>
    <property type="evidence" value="ECO:0007669"/>
    <property type="project" value="UniProtKB-UniRule"/>
</dbReference>
<dbReference type="GO" id="GO:0008360">
    <property type="term" value="P:regulation of cell shape"/>
    <property type="evidence" value="ECO:0007669"/>
    <property type="project" value="UniProtKB-KW"/>
</dbReference>
<dbReference type="Gene3D" id="3.30.465.10">
    <property type="match status" value="1"/>
</dbReference>
<dbReference type="Gene3D" id="3.90.78.10">
    <property type="entry name" value="UDP-N-acetylenolpyruvoylglucosamine reductase, C-terminal domain"/>
    <property type="match status" value="1"/>
</dbReference>
<dbReference type="Gene3D" id="3.30.43.10">
    <property type="entry name" value="Uridine Diphospho-n-acetylenolpyruvylglucosamine Reductase, domain 2"/>
    <property type="match status" value="1"/>
</dbReference>
<dbReference type="HAMAP" id="MF_00037">
    <property type="entry name" value="MurB"/>
    <property type="match status" value="1"/>
</dbReference>
<dbReference type="InterPro" id="IPR016166">
    <property type="entry name" value="FAD-bd_PCMH"/>
</dbReference>
<dbReference type="InterPro" id="IPR036318">
    <property type="entry name" value="FAD-bd_PCMH-like_sf"/>
</dbReference>
<dbReference type="InterPro" id="IPR016167">
    <property type="entry name" value="FAD-bd_PCMH_sub1"/>
</dbReference>
<dbReference type="InterPro" id="IPR016169">
    <property type="entry name" value="FAD-bd_PCMH_sub2"/>
</dbReference>
<dbReference type="InterPro" id="IPR003170">
    <property type="entry name" value="MurB"/>
</dbReference>
<dbReference type="InterPro" id="IPR011601">
    <property type="entry name" value="MurB_C"/>
</dbReference>
<dbReference type="InterPro" id="IPR036635">
    <property type="entry name" value="MurB_C_sf"/>
</dbReference>
<dbReference type="InterPro" id="IPR006094">
    <property type="entry name" value="Oxid_FAD_bind_N"/>
</dbReference>
<dbReference type="NCBIfam" id="TIGR00179">
    <property type="entry name" value="murB"/>
    <property type="match status" value="1"/>
</dbReference>
<dbReference type="NCBIfam" id="NF010480">
    <property type="entry name" value="PRK13905.1"/>
    <property type="match status" value="1"/>
</dbReference>
<dbReference type="PANTHER" id="PTHR21071">
    <property type="entry name" value="UDP-N-ACETYLENOLPYRUVOYLGLUCOSAMINE REDUCTASE"/>
    <property type="match status" value="1"/>
</dbReference>
<dbReference type="PANTHER" id="PTHR21071:SF5">
    <property type="entry name" value="UDP-N-ACETYLENOLPYRUVOYLGLUCOSAMINE REDUCTASE"/>
    <property type="match status" value="1"/>
</dbReference>
<dbReference type="Pfam" id="PF01565">
    <property type="entry name" value="FAD_binding_4"/>
    <property type="match status" value="1"/>
</dbReference>
<dbReference type="Pfam" id="PF02873">
    <property type="entry name" value="MurB_C"/>
    <property type="match status" value="1"/>
</dbReference>
<dbReference type="SUPFAM" id="SSF56176">
    <property type="entry name" value="FAD-binding/transporter-associated domain-like"/>
    <property type="match status" value="1"/>
</dbReference>
<dbReference type="SUPFAM" id="SSF56194">
    <property type="entry name" value="Uridine diphospho-N-Acetylenolpyruvylglucosamine reductase, MurB, C-terminal domain"/>
    <property type="match status" value="1"/>
</dbReference>
<dbReference type="PROSITE" id="PS51387">
    <property type="entry name" value="FAD_PCMH"/>
    <property type="match status" value="1"/>
</dbReference>
<name>MURB_BACVZ</name>
<feature type="chain" id="PRO_1000002862" description="UDP-N-acetylenolpyruvoylglucosamine reductase">
    <location>
        <begin position="1"/>
        <end position="303"/>
    </location>
</feature>
<feature type="domain" description="FAD-binding PCMH-type" evidence="1">
    <location>
        <begin position="29"/>
        <end position="196"/>
    </location>
</feature>
<feature type="active site" evidence="1">
    <location>
        <position position="174"/>
    </location>
</feature>
<feature type="active site" description="Proton donor" evidence="1">
    <location>
        <position position="225"/>
    </location>
</feature>
<feature type="active site" evidence="1">
    <location>
        <position position="295"/>
    </location>
</feature>
<sequence length="303" mass="33016">MENVIQELRDREVGKVLEQEPLANHTTMKIGGPADILIIPNRVEAVKDIMDIVKKHDLPWTVIGRGSNLLVLDEGIRGVVIKLGAGLDHLEIDGDQVTVGGGYSVVRLATSMSKKGMSGLEFAAGIPGSIGGAVYMNAGAHGSDMSEILVKARILFEDGTIEWLTNEEMDFSYRTSVLQKKRPGVCLEAVLQLEQKEREAITAQMQQNKDYRKNTQPYSSPCAGSIFRNPLPDHAGNLVEKAGLKGHQIGGAKVSEMHGNFIVNAGGATAKDVLDLIEYVKKTIREQYDVDMHTEVEIIGGNR</sequence>
<protein>
    <recommendedName>
        <fullName evidence="1">UDP-N-acetylenolpyruvoylglucosamine reductase</fullName>
        <ecNumber evidence="1">1.3.1.98</ecNumber>
    </recommendedName>
    <alternativeName>
        <fullName evidence="1">UDP-N-acetylmuramate dehydrogenase</fullName>
    </alternativeName>
</protein>
<evidence type="ECO:0000255" key="1">
    <source>
        <dbReference type="HAMAP-Rule" id="MF_00037"/>
    </source>
</evidence>
<keyword id="KW-0131">Cell cycle</keyword>
<keyword id="KW-0132">Cell division</keyword>
<keyword id="KW-0133">Cell shape</keyword>
<keyword id="KW-0961">Cell wall biogenesis/degradation</keyword>
<keyword id="KW-0963">Cytoplasm</keyword>
<keyword id="KW-0274">FAD</keyword>
<keyword id="KW-0285">Flavoprotein</keyword>
<keyword id="KW-0521">NADP</keyword>
<keyword id="KW-0560">Oxidoreductase</keyword>
<keyword id="KW-0573">Peptidoglycan synthesis</keyword>
<comment type="function">
    <text evidence="1">Cell wall formation.</text>
</comment>
<comment type="catalytic activity">
    <reaction evidence="1">
        <text>UDP-N-acetyl-alpha-D-muramate + NADP(+) = UDP-N-acetyl-3-O-(1-carboxyvinyl)-alpha-D-glucosamine + NADPH + H(+)</text>
        <dbReference type="Rhea" id="RHEA:12248"/>
        <dbReference type="ChEBI" id="CHEBI:15378"/>
        <dbReference type="ChEBI" id="CHEBI:57783"/>
        <dbReference type="ChEBI" id="CHEBI:58349"/>
        <dbReference type="ChEBI" id="CHEBI:68483"/>
        <dbReference type="ChEBI" id="CHEBI:70757"/>
        <dbReference type="EC" id="1.3.1.98"/>
    </reaction>
</comment>
<comment type="cofactor">
    <cofactor evidence="1">
        <name>FAD</name>
        <dbReference type="ChEBI" id="CHEBI:57692"/>
    </cofactor>
</comment>
<comment type="pathway">
    <text evidence="1">Cell wall biogenesis; peptidoglycan biosynthesis.</text>
</comment>
<comment type="subcellular location">
    <subcellularLocation>
        <location evidence="1">Cytoplasm</location>
    </subcellularLocation>
</comment>
<comment type="similarity">
    <text evidence="1">Belongs to the MurB family.</text>
</comment>
<reference key="1">
    <citation type="journal article" date="2007" name="Nat. Biotechnol.">
        <title>Comparative analysis of the complete genome sequence of the plant growth-promoting bacterium Bacillus amyloliquefaciens FZB42.</title>
        <authorList>
            <person name="Chen X.H."/>
            <person name="Koumoutsi A."/>
            <person name="Scholz R."/>
            <person name="Eisenreich A."/>
            <person name="Schneider K."/>
            <person name="Heinemeyer I."/>
            <person name="Morgenstern B."/>
            <person name="Voss B."/>
            <person name="Hess W.R."/>
            <person name="Reva O."/>
            <person name="Junge H."/>
            <person name="Voigt B."/>
            <person name="Jungblut P.R."/>
            <person name="Vater J."/>
            <person name="Suessmuth R."/>
            <person name="Liesegang H."/>
            <person name="Strittmatter A."/>
            <person name="Gottschalk G."/>
            <person name="Borriss R."/>
        </authorList>
    </citation>
    <scope>NUCLEOTIDE SEQUENCE [LARGE SCALE GENOMIC DNA]</scope>
    <source>
        <strain>DSM 23117 / BGSC 10A6 / LMG 26770 / FZB42</strain>
    </source>
</reference>
<organism>
    <name type="scientific">Bacillus velezensis (strain DSM 23117 / BGSC 10A6 / LMG 26770 / FZB42)</name>
    <name type="common">Bacillus amyloliquefaciens subsp. plantarum</name>
    <dbReference type="NCBI Taxonomy" id="326423"/>
    <lineage>
        <taxon>Bacteria</taxon>
        <taxon>Bacillati</taxon>
        <taxon>Bacillota</taxon>
        <taxon>Bacilli</taxon>
        <taxon>Bacillales</taxon>
        <taxon>Bacillaceae</taxon>
        <taxon>Bacillus</taxon>
        <taxon>Bacillus amyloliquefaciens group</taxon>
    </lineage>
</organism>
<proteinExistence type="inferred from homology"/>
<accession>A7Z4E6</accession>